<organism>
    <name type="scientific">Coffea arabica</name>
    <name type="common">Arabian coffee</name>
    <dbReference type="NCBI Taxonomy" id="13443"/>
    <lineage>
        <taxon>Eukaryota</taxon>
        <taxon>Viridiplantae</taxon>
        <taxon>Streptophyta</taxon>
        <taxon>Embryophyta</taxon>
        <taxon>Tracheophyta</taxon>
        <taxon>Spermatophyta</taxon>
        <taxon>Magnoliopsida</taxon>
        <taxon>eudicotyledons</taxon>
        <taxon>Gunneridae</taxon>
        <taxon>Pentapetalae</taxon>
        <taxon>asterids</taxon>
        <taxon>lamiids</taxon>
        <taxon>Gentianales</taxon>
        <taxon>Rubiaceae</taxon>
        <taxon>Ixoroideae</taxon>
        <taxon>Gardenieae complex</taxon>
        <taxon>Bertiereae - Coffeeae clade</taxon>
        <taxon>Coffeeae</taxon>
        <taxon>Coffea</taxon>
    </lineage>
</organism>
<reference key="1">
    <citation type="journal article" date="1999" name="Plant Sci.">
        <title>Molecular cloning and characterization of coffee cDNA encoding spermidine synthase.</title>
        <authorList>
            <person name="Hatanaka T."/>
            <person name="Sano H."/>
            <person name="Kusano T."/>
        </authorList>
    </citation>
    <scope>NUCLEOTIDE SEQUENCE [MRNA]</scope>
    <source>
        <tissue>Callus</tissue>
    </source>
</reference>
<protein>
    <recommendedName>
        <fullName>Spermidine synthase</fullName>
        <shortName>SPDSY</shortName>
        <ecNumber>2.5.1.16</ecNumber>
    </recommendedName>
    <alternativeName>
        <fullName>Putrescine aminopropyltransferase</fullName>
    </alternativeName>
</protein>
<comment type="catalytic activity">
    <reaction>
        <text>S-adenosyl 3-(methylsulfanyl)propylamine + putrescine = S-methyl-5'-thioadenosine + spermidine + H(+)</text>
        <dbReference type="Rhea" id="RHEA:12721"/>
        <dbReference type="ChEBI" id="CHEBI:15378"/>
        <dbReference type="ChEBI" id="CHEBI:17509"/>
        <dbReference type="ChEBI" id="CHEBI:57443"/>
        <dbReference type="ChEBI" id="CHEBI:57834"/>
        <dbReference type="ChEBI" id="CHEBI:326268"/>
        <dbReference type="EC" id="2.5.1.16"/>
    </reaction>
</comment>
<comment type="pathway">
    <text>Amine and polyamine biosynthesis; spermidine biosynthesis; spermidine from putrescine: step 1/1.</text>
</comment>
<comment type="similarity">
    <text evidence="2">Belongs to the spermidine/spermine synthase family.</text>
</comment>
<dbReference type="EC" id="2.5.1.16"/>
<dbReference type="EMBL" id="AB015599">
    <property type="protein sequence ID" value="BAA29033.1"/>
    <property type="molecule type" value="mRNA"/>
</dbReference>
<dbReference type="SMR" id="O82147"/>
<dbReference type="UniPathway" id="UPA00248">
    <property type="reaction ID" value="UER00314"/>
</dbReference>
<dbReference type="Proteomes" id="UP000515148">
    <property type="component" value="Unplaced"/>
</dbReference>
<dbReference type="GO" id="GO:0005829">
    <property type="term" value="C:cytosol"/>
    <property type="evidence" value="ECO:0007669"/>
    <property type="project" value="TreeGrafter"/>
</dbReference>
<dbReference type="GO" id="GO:0004766">
    <property type="term" value="F:spermidine synthase activity"/>
    <property type="evidence" value="ECO:0007669"/>
    <property type="project" value="UniProtKB-EC"/>
</dbReference>
<dbReference type="GO" id="GO:0008295">
    <property type="term" value="P:spermidine biosynthetic process"/>
    <property type="evidence" value="ECO:0007669"/>
    <property type="project" value="UniProtKB-UniPathway"/>
</dbReference>
<dbReference type="CDD" id="cd02440">
    <property type="entry name" value="AdoMet_MTases"/>
    <property type="match status" value="1"/>
</dbReference>
<dbReference type="FunFam" id="2.30.140.10:FF:000003">
    <property type="entry name" value="Spermidine synthase 1"/>
    <property type="match status" value="1"/>
</dbReference>
<dbReference type="FunFam" id="3.40.50.150:FF:000048">
    <property type="entry name" value="Spermidine synthase 1"/>
    <property type="match status" value="1"/>
</dbReference>
<dbReference type="Gene3D" id="2.30.140.10">
    <property type="entry name" value="Spermidine synthase, tetramerisation domain"/>
    <property type="match status" value="1"/>
</dbReference>
<dbReference type="Gene3D" id="3.40.50.150">
    <property type="entry name" value="Vaccinia Virus protein VP39"/>
    <property type="match status" value="1"/>
</dbReference>
<dbReference type="HAMAP" id="MF_00198">
    <property type="entry name" value="Spermidine_synth"/>
    <property type="match status" value="1"/>
</dbReference>
<dbReference type="InterPro" id="IPR030374">
    <property type="entry name" value="PABS"/>
</dbReference>
<dbReference type="InterPro" id="IPR030373">
    <property type="entry name" value="PABS_CS"/>
</dbReference>
<dbReference type="InterPro" id="IPR029063">
    <property type="entry name" value="SAM-dependent_MTases_sf"/>
</dbReference>
<dbReference type="InterPro" id="IPR001045">
    <property type="entry name" value="Spermi_synthase"/>
</dbReference>
<dbReference type="InterPro" id="IPR030668">
    <property type="entry name" value="Spermi_synthase_euk"/>
</dbReference>
<dbReference type="InterPro" id="IPR035246">
    <property type="entry name" value="Spermidine_synt_N"/>
</dbReference>
<dbReference type="InterPro" id="IPR037163">
    <property type="entry name" value="Spermidine_synt_N_sf"/>
</dbReference>
<dbReference type="NCBIfam" id="NF002010">
    <property type="entry name" value="PRK00811.1"/>
    <property type="match status" value="1"/>
</dbReference>
<dbReference type="NCBIfam" id="TIGR00417">
    <property type="entry name" value="speE"/>
    <property type="match status" value="1"/>
</dbReference>
<dbReference type="PANTHER" id="PTHR11558:SF11">
    <property type="entry name" value="SPERMIDINE SYNTHASE"/>
    <property type="match status" value="1"/>
</dbReference>
<dbReference type="PANTHER" id="PTHR11558">
    <property type="entry name" value="SPERMIDINE/SPERMINE SYNTHASE"/>
    <property type="match status" value="1"/>
</dbReference>
<dbReference type="Pfam" id="PF17284">
    <property type="entry name" value="Spermine_synt_N"/>
    <property type="match status" value="1"/>
</dbReference>
<dbReference type="Pfam" id="PF01564">
    <property type="entry name" value="Spermine_synth"/>
    <property type="match status" value="1"/>
</dbReference>
<dbReference type="PIRSF" id="PIRSF000502">
    <property type="entry name" value="Spermidine_synth"/>
    <property type="match status" value="1"/>
</dbReference>
<dbReference type="SUPFAM" id="SSF53335">
    <property type="entry name" value="S-adenosyl-L-methionine-dependent methyltransferases"/>
    <property type="match status" value="1"/>
</dbReference>
<dbReference type="PROSITE" id="PS01330">
    <property type="entry name" value="PABS_1"/>
    <property type="match status" value="1"/>
</dbReference>
<dbReference type="PROSITE" id="PS51006">
    <property type="entry name" value="PABS_2"/>
    <property type="match status" value="1"/>
</dbReference>
<sequence length="316" mass="34501">MADAVNSNSKEEAAQLPDGVSSVIPGWFSEISPMWPGEAHSLKVEKILFQGKSDYQNVMVFQSSTYGKVLVLDGVIQLTERDECAYQEMIAHLPLCSIPSPKKVLVIGGGDGGVLREVARHLSVEQIDICEIDKMVVDVSKQFFPDVAVGFEDPRVVLHIGDGVAFLKAVPEGTYDAIIVDSSDPIGPAQELFEKPFFESVAKALRPGGVVCTQAESIWLHMHIIEDIVANCRQIFKGSVNYAWTTVPTYPSGVIGFMLCSTEGPPVDFKHPINPIDANDGRSKTMKPLKFYNSEIHSAAFCLPSFAKKVIDSKAN</sequence>
<accession>O82147</accession>
<keyword id="KW-0620">Polyamine biosynthesis</keyword>
<keyword id="KW-1185">Reference proteome</keyword>
<keyword id="KW-0745">Spermidine biosynthesis</keyword>
<keyword id="KW-0808">Transferase</keyword>
<feature type="chain" id="PRO_0000156450" description="Spermidine synthase">
    <location>
        <begin position="1"/>
        <end position="316"/>
    </location>
</feature>
<feature type="domain" description="PABS">
    <location>
        <begin position="25"/>
        <end position="262"/>
    </location>
</feature>
<feature type="active site" description="Proton acceptor" evidence="1">
    <location>
        <position position="181"/>
    </location>
</feature>
<feature type="binding site" evidence="1">
    <location>
        <position position="56"/>
    </location>
    <ligand>
        <name>S-adenosyl 3-(methylsulfanyl)propylamine</name>
        <dbReference type="ChEBI" id="CHEBI:57443"/>
    </ligand>
</feature>
<feature type="binding site" evidence="1">
    <location>
        <position position="86"/>
    </location>
    <ligand>
        <name>putrescine</name>
        <dbReference type="ChEBI" id="CHEBI:326268"/>
    </ligand>
</feature>
<feature type="binding site" evidence="1">
    <location>
        <position position="87"/>
    </location>
    <ligand>
        <name>S-adenosyl 3-(methylsulfanyl)propylamine</name>
        <dbReference type="ChEBI" id="CHEBI:57443"/>
    </ligand>
</feature>
<feature type="binding site" evidence="1">
    <location>
        <position position="111"/>
    </location>
    <ligand>
        <name>S-adenosyl 3-(methylsulfanyl)propylamine</name>
        <dbReference type="ChEBI" id="CHEBI:57443"/>
    </ligand>
</feature>
<feature type="binding site" evidence="1">
    <location>
        <position position="131"/>
    </location>
    <ligand>
        <name>S-adenosyl 3-(methylsulfanyl)propylamine</name>
        <dbReference type="ChEBI" id="CHEBI:57443"/>
    </ligand>
</feature>
<feature type="binding site" evidence="1">
    <location>
        <begin position="162"/>
        <end position="163"/>
    </location>
    <ligand>
        <name>S-adenosyl 3-(methylsulfanyl)propylamine</name>
        <dbReference type="ChEBI" id="CHEBI:57443"/>
    </ligand>
</feature>
<feature type="binding site" evidence="1">
    <location>
        <begin position="181"/>
        <end position="184"/>
    </location>
    <ligand>
        <name>putrescine</name>
        <dbReference type="ChEBI" id="CHEBI:326268"/>
    </ligand>
</feature>
<feature type="binding site" evidence="1">
    <location>
        <position position="181"/>
    </location>
    <ligand>
        <name>S-adenosyl 3-(methylsulfanyl)propylamine</name>
        <dbReference type="ChEBI" id="CHEBI:57443"/>
    </ligand>
</feature>
<feature type="binding site" evidence="1">
    <location>
        <position position="250"/>
    </location>
    <ligand>
        <name>putrescine</name>
        <dbReference type="ChEBI" id="CHEBI:326268"/>
    </ligand>
</feature>
<evidence type="ECO:0000250" key="1"/>
<evidence type="ECO:0000305" key="2"/>
<proteinExistence type="evidence at transcript level"/>
<name>SPDE_COFAR</name>